<reference key="1">
    <citation type="journal article" date="2004" name="Nature">
        <title>DNA sequence and analysis of human chromosome 9.</title>
        <authorList>
            <person name="Humphray S.J."/>
            <person name="Oliver K."/>
            <person name="Hunt A.R."/>
            <person name="Plumb R.W."/>
            <person name="Loveland J.E."/>
            <person name="Howe K.L."/>
            <person name="Andrews T.D."/>
            <person name="Searle S."/>
            <person name="Hunt S.E."/>
            <person name="Scott C.E."/>
            <person name="Jones M.C."/>
            <person name="Ainscough R."/>
            <person name="Almeida J.P."/>
            <person name="Ambrose K.D."/>
            <person name="Ashwell R.I.S."/>
            <person name="Babbage A.K."/>
            <person name="Babbage S."/>
            <person name="Bagguley C.L."/>
            <person name="Bailey J."/>
            <person name="Banerjee R."/>
            <person name="Barker D.J."/>
            <person name="Barlow K.F."/>
            <person name="Bates K."/>
            <person name="Beasley H."/>
            <person name="Beasley O."/>
            <person name="Bird C.P."/>
            <person name="Bray-Allen S."/>
            <person name="Brown A.J."/>
            <person name="Brown J.Y."/>
            <person name="Burford D."/>
            <person name="Burrill W."/>
            <person name="Burton J."/>
            <person name="Carder C."/>
            <person name="Carter N.P."/>
            <person name="Chapman J.C."/>
            <person name="Chen Y."/>
            <person name="Clarke G."/>
            <person name="Clark S.Y."/>
            <person name="Clee C.M."/>
            <person name="Clegg S."/>
            <person name="Collier R.E."/>
            <person name="Corby N."/>
            <person name="Crosier M."/>
            <person name="Cummings A.T."/>
            <person name="Davies J."/>
            <person name="Dhami P."/>
            <person name="Dunn M."/>
            <person name="Dutta I."/>
            <person name="Dyer L.W."/>
            <person name="Earthrowl M.E."/>
            <person name="Faulkner L."/>
            <person name="Fleming C.J."/>
            <person name="Frankish A."/>
            <person name="Frankland J.A."/>
            <person name="French L."/>
            <person name="Fricker D.G."/>
            <person name="Garner P."/>
            <person name="Garnett J."/>
            <person name="Ghori J."/>
            <person name="Gilbert J.G.R."/>
            <person name="Glison C."/>
            <person name="Grafham D.V."/>
            <person name="Gribble S."/>
            <person name="Griffiths C."/>
            <person name="Griffiths-Jones S."/>
            <person name="Grocock R."/>
            <person name="Guy J."/>
            <person name="Hall R.E."/>
            <person name="Hammond S."/>
            <person name="Harley J.L."/>
            <person name="Harrison E.S.I."/>
            <person name="Hart E.A."/>
            <person name="Heath P.D."/>
            <person name="Henderson C.D."/>
            <person name="Hopkins B.L."/>
            <person name="Howard P.J."/>
            <person name="Howden P.J."/>
            <person name="Huckle E."/>
            <person name="Johnson C."/>
            <person name="Johnson D."/>
            <person name="Joy A.A."/>
            <person name="Kay M."/>
            <person name="Keenan S."/>
            <person name="Kershaw J.K."/>
            <person name="Kimberley A.M."/>
            <person name="King A."/>
            <person name="Knights A."/>
            <person name="Laird G.K."/>
            <person name="Langford C."/>
            <person name="Lawlor S."/>
            <person name="Leongamornlert D.A."/>
            <person name="Leversha M."/>
            <person name="Lloyd C."/>
            <person name="Lloyd D.M."/>
            <person name="Lovell J."/>
            <person name="Martin S."/>
            <person name="Mashreghi-Mohammadi M."/>
            <person name="Matthews L."/>
            <person name="McLaren S."/>
            <person name="McLay K.E."/>
            <person name="McMurray A."/>
            <person name="Milne S."/>
            <person name="Nickerson T."/>
            <person name="Nisbett J."/>
            <person name="Nordsiek G."/>
            <person name="Pearce A.V."/>
            <person name="Peck A.I."/>
            <person name="Porter K.M."/>
            <person name="Pandian R."/>
            <person name="Pelan S."/>
            <person name="Phillimore B."/>
            <person name="Povey S."/>
            <person name="Ramsey Y."/>
            <person name="Rand V."/>
            <person name="Scharfe M."/>
            <person name="Sehra H.K."/>
            <person name="Shownkeen R."/>
            <person name="Sims S.K."/>
            <person name="Skuce C.D."/>
            <person name="Smith M."/>
            <person name="Steward C.A."/>
            <person name="Swarbreck D."/>
            <person name="Sycamore N."/>
            <person name="Tester J."/>
            <person name="Thorpe A."/>
            <person name="Tracey A."/>
            <person name="Tromans A."/>
            <person name="Thomas D.W."/>
            <person name="Wall M."/>
            <person name="Wallis J.M."/>
            <person name="West A.P."/>
            <person name="Whitehead S.L."/>
            <person name="Willey D.L."/>
            <person name="Williams S.A."/>
            <person name="Wilming L."/>
            <person name="Wray P.W."/>
            <person name="Young L."/>
            <person name="Ashurst J.L."/>
            <person name="Coulson A."/>
            <person name="Blocker H."/>
            <person name="Durbin R.M."/>
            <person name="Sulston J.E."/>
            <person name="Hubbard T."/>
            <person name="Jackson M.J."/>
            <person name="Bentley D.R."/>
            <person name="Beck S."/>
            <person name="Rogers J."/>
            <person name="Dunham I."/>
        </authorList>
    </citation>
    <scope>NUCLEOTIDE SEQUENCE [LARGE SCALE GENOMIC DNA]</scope>
</reference>
<reference key="2">
    <citation type="submission" date="2005-07" db="EMBL/GenBank/DDBJ databases">
        <authorList>
            <person name="Mural R.J."/>
            <person name="Istrail S."/>
            <person name="Sutton G.G."/>
            <person name="Florea L."/>
            <person name="Halpern A.L."/>
            <person name="Mobarry C.M."/>
            <person name="Lippert R."/>
            <person name="Walenz B."/>
            <person name="Shatkay H."/>
            <person name="Dew I."/>
            <person name="Miller J.R."/>
            <person name="Flanigan M.J."/>
            <person name="Edwards N.J."/>
            <person name="Bolanos R."/>
            <person name="Fasulo D."/>
            <person name="Halldorsson B.V."/>
            <person name="Hannenhalli S."/>
            <person name="Turner R."/>
            <person name="Yooseph S."/>
            <person name="Lu F."/>
            <person name="Nusskern D.R."/>
            <person name="Shue B.C."/>
            <person name="Zheng X.H."/>
            <person name="Zhong F."/>
            <person name="Delcher A.L."/>
            <person name="Huson D.H."/>
            <person name="Kravitz S.A."/>
            <person name="Mouchard L."/>
            <person name="Reinert K."/>
            <person name="Remington K.A."/>
            <person name="Clark A.G."/>
            <person name="Waterman M.S."/>
            <person name="Eichler E.E."/>
            <person name="Adams M.D."/>
            <person name="Hunkapiller M.W."/>
            <person name="Myers E.W."/>
            <person name="Venter J.C."/>
        </authorList>
    </citation>
    <scope>NUCLEOTIDE SEQUENCE [LARGE SCALE GENOMIC DNA]</scope>
</reference>
<reference key="3">
    <citation type="journal article" date="2004" name="Genome Res.">
        <title>The status, quality, and expansion of the NIH full-length cDNA project: the Mammalian Gene Collection (MGC).</title>
        <authorList>
            <consortium name="The MGC Project Team"/>
        </authorList>
    </citation>
    <scope>NUCLEOTIDE SEQUENCE [LARGE SCALE MRNA]</scope>
    <source>
        <tissue>Urinary bladder</tissue>
    </source>
</reference>
<reference key="4">
    <citation type="journal article" date="1999" name="J. Biol. Chem.">
        <title>Molecular cloning and characterization of a mitogen-activated protein kinase-associated intracellular chloride channel.</title>
        <authorList>
            <person name="Qian Z."/>
            <person name="Okuhara D."/>
            <person name="Abe M.K."/>
            <person name="Rosner M.R."/>
        </authorList>
    </citation>
    <scope>NUCLEOTIDE SEQUENCE [MRNA] OF 5-236</scope>
    <scope>SUBCELLULAR LOCATION</scope>
    <scope>FUNCTION</scope>
    <scope>TISSUE SPECIFICITY</scope>
    <scope>INTERACTION WITH MAPK15</scope>
    <source>
        <tissue>Fetal brain</tissue>
    </source>
</reference>
<reference key="5">
    <citation type="journal article" date="2007" name="Placenta">
        <title>Expression and cellular localisation of chloride intracellular channel 3 in human placenta and fetal membranes.</title>
        <authorList>
            <person name="Money T.T."/>
            <person name="King R.G."/>
            <person name="Wong M.H."/>
            <person name="Stevenson J.L."/>
            <person name="Kalionis B."/>
            <person name="Erwich J.J.H.M."/>
            <person name="Huisman M.A."/>
            <person name="Timmer A."/>
            <person name="Hiden U."/>
            <person name="Desoye G."/>
            <person name="Gude N.M."/>
        </authorList>
    </citation>
    <scope>SUBCELLULAR LOCATION</scope>
    <scope>TISSUE SPECIFICITY</scope>
</reference>
<reference key="6">
    <citation type="journal article" date="2013" name="J. Proteome Res.">
        <title>Toward a comprehensive characterization of a human cancer cell phosphoproteome.</title>
        <authorList>
            <person name="Zhou H."/>
            <person name="Di Palma S."/>
            <person name="Preisinger C."/>
            <person name="Peng M."/>
            <person name="Polat A.N."/>
            <person name="Heck A.J."/>
            <person name="Mohammed S."/>
        </authorList>
    </citation>
    <scope>PHOSPHORYLATION [LARGE SCALE ANALYSIS] AT SER-49 AND SER-159</scope>
    <scope>IDENTIFICATION BY MASS SPECTROMETRY [LARGE SCALE ANALYSIS]</scope>
    <source>
        <tissue>Cervix carcinoma</tissue>
    </source>
</reference>
<reference key="7">
    <citation type="journal article" date="2017" name="Nat. Commun.">
        <title>Secreted CLIC3 drives cancer progression through its glutathione-dependent oxidoreductase activity.</title>
        <authorList>
            <person name="Hernandez-Fernaud J.R."/>
            <person name="Ruengeler E."/>
            <person name="Casazza A."/>
            <person name="Neilson L.J."/>
            <person name="Pulleine E."/>
            <person name="Santi A."/>
            <person name="Ismail S."/>
            <person name="Lilla S."/>
            <person name="Dhayade S."/>
            <person name="MacPherson I.R."/>
            <person name="McNeish I."/>
            <person name="Ennis D."/>
            <person name="Ali H."/>
            <person name="Kugeratski F.G."/>
            <person name="Al Khamici H."/>
            <person name="van den Biggelaar M."/>
            <person name="van den Berghe P.V."/>
            <person name="Cloix C."/>
            <person name="McDonald L."/>
            <person name="Millan D."/>
            <person name="Hoyle A."/>
            <person name="Kuchnio A."/>
            <person name="Carmeliet P."/>
            <person name="Valenzuela S.M."/>
            <person name="Blyth K."/>
            <person name="Yin H."/>
            <person name="Mazzone M."/>
            <person name="Norman J.C."/>
            <person name="Zanivan S."/>
        </authorList>
    </citation>
    <scope>FUNCTION</scope>
    <scope>SUBCELLULAR LOCATION</scope>
    <scope>DOMAIN</scope>
    <scope>MUTAGENESIS OF CYS-22</scope>
</reference>
<reference key="8">
    <citation type="journal article" date="2020" name="J. Physiol. Sci.">
        <title>Pathophysiological properties of CLIC3 chloride channel in human gastric cancer cells.</title>
        <authorList>
            <person name="Kawai S."/>
            <person name="Fujii T."/>
            <person name="Shimizu T."/>
            <person name="Sukegawa K."/>
            <person name="Hashimoto I."/>
            <person name="Okumura T."/>
            <person name="Nagata T."/>
            <person name="Sakai H."/>
            <person name="Fujii T."/>
        </authorList>
    </citation>
    <scope>FUNCTION</scope>
    <scope>TRANSPORTER ACTIVITY</scope>
    <scope>SUBCELLULAR LOCATION</scope>
</reference>
<reference key="9">
    <citation type="journal article" date="2023" name="Biomolecules">
        <title>In Vitro Enzymatic Studies Reveal pH and Temperature Sensitive Properties of the CLIC Proteins.</title>
        <authorList>
            <person name="Alghalayini A."/>
            <person name="Hossain K.R."/>
            <person name="Moghaddasi S."/>
            <person name="Turkewitz D.R."/>
            <person name="D'Amario C."/>
            <person name="Wallach M."/>
            <person name="Valenzuela S.M."/>
        </authorList>
    </citation>
    <scope>FUNCTION</scope>
    <scope>BIOPHYSICOCHEMICAL PROPERTIES</scope>
    <scope>ACTIVITY REGULATION</scope>
</reference>
<reference key="10">
    <citation type="journal article" date="2010" name="Proteins">
        <title>Structure of human CLIC3 at 2 A resolution.</title>
        <authorList>
            <person name="Littler D.R."/>
            <person name="Brown L.J."/>
            <person name="Breit S.N."/>
            <person name="Perrakis A."/>
            <person name="Curmi P.M."/>
        </authorList>
    </citation>
    <scope>X-RAY CRYSTALLOGRAPHY (1.95 ANGSTROMS) OF 1-230</scope>
    <scope>DISULFIDE BOND</scope>
</reference>
<sequence>MAETKLQLFVKASEDGESVGHCPSCQRLFMVLLLKGVPFTLTTVDTRRSPDVLKDFAPGSQLPILLYDSDAKTDTLQIEDFLEETLGPPDFPSLAPRYRESNTAGNDVFHKFSAFIKNPVPAQDEALYQQLLRALARLDSYLRAPLEHELAGEPQLRESRRRFLDGDRLTLADCSLLPKLHIVDTVCAHFRQAPIPAELRGVRRYLDSAMQEKEFKYTCPHSAEILAAYRPAVHPR</sequence>
<organism>
    <name type="scientific">Homo sapiens</name>
    <name type="common">Human</name>
    <dbReference type="NCBI Taxonomy" id="9606"/>
    <lineage>
        <taxon>Eukaryota</taxon>
        <taxon>Metazoa</taxon>
        <taxon>Chordata</taxon>
        <taxon>Craniata</taxon>
        <taxon>Vertebrata</taxon>
        <taxon>Euteleostomi</taxon>
        <taxon>Mammalia</taxon>
        <taxon>Eutheria</taxon>
        <taxon>Euarchontoglires</taxon>
        <taxon>Primates</taxon>
        <taxon>Haplorrhini</taxon>
        <taxon>Catarrhini</taxon>
        <taxon>Hominidae</taxon>
        <taxon>Homo</taxon>
    </lineage>
</organism>
<evidence type="ECO:0000250" key="1"/>
<evidence type="ECO:0000255" key="2"/>
<evidence type="ECO:0000255" key="3">
    <source>
        <dbReference type="PROSITE-ProRule" id="PRU00684"/>
    </source>
</evidence>
<evidence type="ECO:0000255" key="4">
    <source>
        <dbReference type="PROSITE-ProRule" id="PRU00685"/>
    </source>
</evidence>
<evidence type="ECO:0000269" key="5">
    <source>
    </source>
</evidence>
<evidence type="ECO:0000269" key="6">
    <source>
    </source>
</evidence>
<evidence type="ECO:0000269" key="7">
    <source>
    </source>
</evidence>
<evidence type="ECO:0000269" key="8">
    <source>
    </source>
</evidence>
<evidence type="ECO:0000269" key="9">
    <source>
    </source>
</evidence>
<evidence type="ECO:0000269" key="10">
    <source>
    </source>
</evidence>
<evidence type="ECO:0000303" key="11">
    <source>
    </source>
</evidence>
<evidence type="ECO:0000305" key="12"/>
<evidence type="ECO:0000305" key="13">
    <source>
    </source>
</evidence>
<evidence type="ECO:0000305" key="14">
    <source>
    </source>
</evidence>
<evidence type="ECO:0000305" key="15">
    <source>
    </source>
</evidence>
<evidence type="ECO:0000312" key="16">
    <source>
        <dbReference type="HGNC" id="HGNC:2064"/>
    </source>
</evidence>
<evidence type="ECO:0007744" key="17">
    <source>
    </source>
</evidence>
<evidence type="ECO:0007829" key="18">
    <source>
        <dbReference type="PDB" id="3FY7"/>
    </source>
</evidence>
<gene>
    <name evidence="11 16" type="primary">CLIC3</name>
</gene>
<accession>O95833</accession>
<accession>Q5SPZ7</accession>
<dbReference type="EC" id="1.8.-.-" evidence="9"/>
<dbReference type="EMBL" id="AL807752">
    <property type="status" value="NOT_ANNOTATED_CDS"/>
    <property type="molecule type" value="Genomic_DNA"/>
</dbReference>
<dbReference type="EMBL" id="CH471090">
    <property type="protein sequence ID" value="EAW88329.1"/>
    <property type="molecule type" value="Genomic_DNA"/>
</dbReference>
<dbReference type="EMBL" id="BC007012">
    <property type="protein sequence ID" value="AAH07012.2"/>
    <property type="molecule type" value="mRNA"/>
</dbReference>
<dbReference type="EMBL" id="AF102166">
    <property type="protein sequence ID" value="AAD16450.1"/>
    <property type="status" value="ALT_FRAME"/>
    <property type="molecule type" value="mRNA"/>
</dbReference>
<dbReference type="CCDS" id="CCDS7021.1"/>
<dbReference type="RefSeq" id="NP_004660.2">
    <property type="nucleotide sequence ID" value="NM_004669.2"/>
</dbReference>
<dbReference type="RefSeq" id="XP_016870771.1">
    <property type="nucleotide sequence ID" value="XM_017015282.1"/>
</dbReference>
<dbReference type="PDB" id="3FY7">
    <property type="method" value="X-ray"/>
    <property type="resolution" value="1.95 A"/>
    <property type="chains" value="A/B=1-230"/>
</dbReference>
<dbReference type="PDB" id="3KJY">
    <property type="method" value="X-ray"/>
    <property type="resolution" value="1.95 A"/>
    <property type="chains" value="A/B=1-230"/>
</dbReference>
<dbReference type="PDBsum" id="3FY7"/>
<dbReference type="PDBsum" id="3KJY"/>
<dbReference type="SMR" id="O95833"/>
<dbReference type="BioGRID" id="114489">
    <property type="interactions" value="72"/>
</dbReference>
<dbReference type="FunCoup" id="O95833">
    <property type="interactions" value="1166"/>
</dbReference>
<dbReference type="IntAct" id="O95833">
    <property type="interactions" value="51"/>
</dbReference>
<dbReference type="STRING" id="9606.ENSP00000419378"/>
<dbReference type="TCDB" id="1.A.12.1.7">
    <property type="family name" value="the intracellular chloride channel (clic) family"/>
</dbReference>
<dbReference type="iPTMnet" id="O95833"/>
<dbReference type="PhosphoSitePlus" id="O95833"/>
<dbReference type="BioMuta" id="CLIC3"/>
<dbReference type="jPOST" id="O95833"/>
<dbReference type="MassIVE" id="O95833"/>
<dbReference type="PaxDb" id="9606-ENSP00000419378"/>
<dbReference type="PeptideAtlas" id="O95833"/>
<dbReference type="PRIDE" id="O95833"/>
<dbReference type="ProteomicsDB" id="51078"/>
<dbReference type="Pumba" id="O95833"/>
<dbReference type="Antibodypedia" id="991">
    <property type="antibodies" value="235 antibodies from 31 providers"/>
</dbReference>
<dbReference type="DNASU" id="9022"/>
<dbReference type="Ensembl" id="ENST00000494426.2">
    <property type="protein sequence ID" value="ENSP00000419378.1"/>
    <property type="gene ID" value="ENSG00000169583.13"/>
</dbReference>
<dbReference type="GeneID" id="9022"/>
<dbReference type="KEGG" id="hsa:9022"/>
<dbReference type="MANE-Select" id="ENST00000494426.2">
    <property type="protein sequence ID" value="ENSP00000419378.1"/>
    <property type="RefSeq nucleotide sequence ID" value="NM_004669.3"/>
    <property type="RefSeq protein sequence ID" value="NP_004660.2"/>
</dbReference>
<dbReference type="UCSC" id="uc004ckj.2">
    <property type="organism name" value="human"/>
</dbReference>
<dbReference type="AGR" id="HGNC:2064"/>
<dbReference type="CTD" id="9022"/>
<dbReference type="DisGeNET" id="9022"/>
<dbReference type="GeneCards" id="CLIC3"/>
<dbReference type="HGNC" id="HGNC:2064">
    <property type="gene designation" value="CLIC3"/>
</dbReference>
<dbReference type="HPA" id="ENSG00000169583">
    <property type="expression patterns" value="Tissue enhanced (esophagus, skin, thyroid gland, vagina)"/>
</dbReference>
<dbReference type="MIM" id="606533">
    <property type="type" value="gene"/>
</dbReference>
<dbReference type="neXtProt" id="NX_O95833"/>
<dbReference type="OpenTargets" id="ENSG00000169583"/>
<dbReference type="PharmGKB" id="PA26590"/>
<dbReference type="VEuPathDB" id="HostDB:ENSG00000169583"/>
<dbReference type="eggNOG" id="KOG1422">
    <property type="taxonomic scope" value="Eukaryota"/>
</dbReference>
<dbReference type="GeneTree" id="ENSGT00940000161243"/>
<dbReference type="HOGENOM" id="CLU_061051_1_0_1"/>
<dbReference type="InParanoid" id="O95833"/>
<dbReference type="OMA" id="VQVVCQH"/>
<dbReference type="OrthoDB" id="1935530at2759"/>
<dbReference type="PAN-GO" id="O95833">
    <property type="GO annotations" value="4 GO annotations based on evolutionary models"/>
</dbReference>
<dbReference type="PhylomeDB" id="O95833"/>
<dbReference type="TreeFam" id="TF315438"/>
<dbReference type="PathwayCommons" id="O95833"/>
<dbReference type="SignaLink" id="O95833"/>
<dbReference type="BioGRID-ORCS" id="9022">
    <property type="hits" value="26 hits in 1153 CRISPR screens"/>
</dbReference>
<dbReference type="CD-CODE" id="91857CE7">
    <property type="entry name" value="Nucleolus"/>
</dbReference>
<dbReference type="EvolutionaryTrace" id="O95833"/>
<dbReference type="GeneWiki" id="CLIC3"/>
<dbReference type="GenomeRNAi" id="9022"/>
<dbReference type="Pharos" id="O95833">
    <property type="development level" value="Tbio"/>
</dbReference>
<dbReference type="PRO" id="PR:O95833"/>
<dbReference type="Proteomes" id="UP000005640">
    <property type="component" value="Chromosome 9"/>
</dbReference>
<dbReference type="RNAct" id="O95833">
    <property type="molecule type" value="protein"/>
</dbReference>
<dbReference type="Bgee" id="ENSG00000169583">
    <property type="expression patterns" value="Expressed in lower esophagus mucosa and 125 other cell types or tissues"/>
</dbReference>
<dbReference type="GO" id="GO:0034707">
    <property type="term" value="C:chloride channel complex"/>
    <property type="evidence" value="ECO:0007669"/>
    <property type="project" value="UniProtKB-KW"/>
</dbReference>
<dbReference type="GO" id="GO:0005737">
    <property type="term" value="C:cytoplasm"/>
    <property type="evidence" value="ECO:0000314"/>
    <property type="project" value="UniProtKB"/>
</dbReference>
<dbReference type="GO" id="GO:0070062">
    <property type="term" value="C:extracellular exosome"/>
    <property type="evidence" value="ECO:0007005"/>
    <property type="project" value="UniProtKB"/>
</dbReference>
<dbReference type="GO" id="GO:0031012">
    <property type="term" value="C:extracellular matrix"/>
    <property type="evidence" value="ECO:0000314"/>
    <property type="project" value="UniProtKB"/>
</dbReference>
<dbReference type="GO" id="GO:0016020">
    <property type="term" value="C:membrane"/>
    <property type="evidence" value="ECO:0000318"/>
    <property type="project" value="GO_Central"/>
</dbReference>
<dbReference type="GO" id="GO:0016604">
    <property type="term" value="C:nuclear body"/>
    <property type="evidence" value="ECO:0000314"/>
    <property type="project" value="HPA"/>
</dbReference>
<dbReference type="GO" id="GO:0005634">
    <property type="term" value="C:nucleus"/>
    <property type="evidence" value="ECO:0000314"/>
    <property type="project" value="UniProtKB"/>
</dbReference>
<dbReference type="GO" id="GO:0005886">
    <property type="term" value="C:plasma membrane"/>
    <property type="evidence" value="ECO:0007669"/>
    <property type="project" value="UniProtKB-SubCell"/>
</dbReference>
<dbReference type="GO" id="GO:0005254">
    <property type="term" value="F:chloride channel activity"/>
    <property type="evidence" value="ECO:0000315"/>
    <property type="project" value="UniProtKB"/>
</dbReference>
<dbReference type="GO" id="GO:0019153">
    <property type="term" value="F:protein-disulfide reductase (glutathione) activity"/>
    <property type="evidence" value="ECO:0000314"/>
    <property type="project" value="UniProtKB"/>
</dbReference>
<dbReference type="GO" id="GO:0006821">
    <property type="term" value="P:chloride transport"/>
    <property type="evidence" value="ECO:0000315"/>
    <property type="project" value="UniProtKB"/>
</dbReference>
<dbReference type="GO" id="GO:1903672">
    <property type="term" value="P:positive regulation of sprouting angiogenesis"/>
    <property type="evidence" value="ECO:0000314"/>
    <property type="project" value="UniProtKB"/>
</dbReference>
<dbReference type="GO" id="GO:0007165">
    <property type="term" value="P:signal transduction"/>
    <property type="evidence" value="ECO:0000304"/>
    <property type="project" value="ProtInc"/>
</dbReference>
<dbReference type="CDD" id="cd10299">
    <property type="entry name" value="GST_C_CLIC3"/>
    <property type="match status" value="1"/>
</dbReference>
<dbReference type="CDD" id="cd03061">
    <property type="entry name" value="GST_N_CLIC"/>
    <property type="match status" value="1"/>
</dbReference>
<dbReference type="FunFam" id="1.20.1050.10:FF:000001">
    <property type="entry name" value="Chloride intracellular channel 2"/>
    <property type="match status" value="1"/>
</dbReference>
<dbReference type="FunFam" id="3.40.30.10:FF:000170">
    <property type="entry name" value="Chloride intracellular channel 3"/>
    <property type="match status" value="1"/>
</dbReference>
<dbReference type="Gene3D" id="1.20.1050.10">
    <property type="match status" value="1"/>
</dbReference>
<dbReference type="Gene3D" id="3.40.30.10">
    <property type="entry name" value="Glutaredoxin"/>
    <property type="match status" value="1"/>
</dbReference>
<dbReference type="InterPro" id="IPR002946">
    <property type="entry name" value="CLIC"/>
</dbReference>
<dbReference type="InterPro" id="IPR053823">
    <property type="entry name" value="CLIC_N"/>
</dbReference>
<dbReference type="InterPro" id="IPR010987">
    <property type="entry name" value="Glutathione-S-Trfase_C-like"/>
</dbReference>
<dbReference type="InterPro" id="IPR036282">
    <property type="entry name" value="Glutathione-S-Trfase_C_sf"/>
</dbReference>
<dbReference type="InterPro" id="IPR040079">
    <property type="entry name" value="Glutathione_S-Trfase"/>
</dbReference>
<dbReference type="InterPro" id="IPR036249">
    <property type="entry name" value="Thioredoxin-like_sf"/>
</dbReference>
<dbReference type="PANTHER" id="PTHR45476:SF7">
    <property type="entry name" value="CHLORIDE INTRACELLULAR CHANNEL 3"/>
    <property type="match status" value="1"/>
</dbReference>
<dbReference type="PANTHER" id="PTHR45476">
    <property type="entry name" value="CHLORIDE INTRACELLULAR CHANNEL PROTEIN 6-RELATED"/>
    <property type="match status" value="1"/>
</dbReference>
<dbReference type="Pfam" id="PF22441">
    <property type="entry name" value="CLIC-like_N"/>
    <property type="match status" value="1"/>
</dbReference>
<dbReference type="Pfam" id="PF13410">
    <property type="entry name" value="GST_C_2"/>
    <property type="match status" value="1"/>
</dbReference>
<dbReference type="PRINTS" id="PR01263">
    <property type="entry name" value="INTCLCHANNEL"/>
</dbReference>
<dbReference type="SFLD" id="SFLDS00019">
    <property type="entry name" value="Glutathione_Transferase_(cytos"/>
    <property type="match status" value="1"/>
</dbReference>
<dbReference type="SUPFAM" id="SSF47616">
    <property type="entry name" value="GST C-terminal domain-like"/>
    <property type="match status" value="1"/>
</dbReference>
<dbReference type="SUPFAM" id="SSF52833">
    <property type="entry name" value="Thioredoxin-like"/>
    <property type="match status" value="1"/>
</dbReference>
<dbReference type="PROSITE" id="PS50405">
    <property type="entry name" value="GST_CTER"/>
    <property type="match status" value="1"/>
</dbReference>
<dbReference type="PROSITE" id="PS50404">
    <property type="entry name" value="GST_NTER"/>
    <property type="match status" value="1"/>
</dbReference>
<keyword id="KW-0002">3D-structure</keyword>
<keyword id="KW-1003">Cell membrane</keyword>
<keyword id="KW-0868">Chloride</keyword>
<keyword id="KW-0869">Chloride channel</keyword>
<keyword id="KW-0963">Cytoplasm</keyword>
<keyword id="KW-1015">Disulfide bond</keyword>
<keyword id="KW-0272">Extracellular matrix</keyword>
<keyword id="KW-0407">Ion channel</keyword>
<keyword id="KW-0406">Ion transport</keyword>
<keyword id="KW-0472">Membrane</keyword>
<keyword id="KW-0539">Nucleus</keyword>
<keyword id="KW-0560">Oxidoreductase</keyword>
<keyword id="KW-0597">Phosphoprotein</keyword>
<keyword id="KW-1267">Proteomics identification</keyword>
<keyword id="KW-1185">Reference proteome</keyword>
<keyword id="KW-0964">Secreted</keyword>
<keyword id="KW-0812">Transmembrane</keyword>
<keyword id="KW-1133">Transmembrane helix</keyword>
<keyword id="KW-0813">Transport</keyword>
<keyword id="KW-0851">Voltage-gated channel</keyword>
<proteinExistence type="evidence at protein level"/>
<comment type="function">
    <text evidence="7 8 9 10">In the soluble state, catalyzes glutaredoxin-like thiol disulfide exchange reactions with reduced glutathione as electron donor (PubMed:28198360, PubMed:37759794). Reduced in a glutathione-dependent way and secreted into the extracellular matrix where it activates TGM2 and promotes blood vessel growth during tissue remodeling as occurs in tumorigenesis. Can reduce specific cysteines in TGM2 and regulate cofactor binding (PubMed:28198360). Can insert into membranes and form outwardly rectifying chloride ion channels. May participate in cellular growth control.</text>
</comment>
<comment type="catalytic activity">
    <reaction evidence="14">
        <text>chloride(in) = chloride(out)</text>
        <dbReference type="Rhea" id="RHEA:29823"/>
        <dbReference type="ChEBI" id="CHEBI:17996"/>
    </reaction>
</comment>
<comment type="activity regulation">
    <text evidence="9">Inhibited by rapamycin, amphotericin B and IAA-94.</text>
</comment>
<comment type="biophysicochemical properties">
    <kinetics>
        <KM evidence="9">0.2663 mM for 2-hydroxyethyl disulfide (HEDS)</KM>
        <Vmax evidence="9">6.153 umol/min/mg enzyme toward 2-hydroxyethyl disulfide (HEDS)</Vmax>
    </kinetics>
    <phDependence>
        <text evidence="9">Optimally active at acidic pH.</text>
    </phDependence>
</comment>
<comment type="subunit">
    <text evidence="10">Associated with the C-terminal of MAPK15.</text>
</comment>
<comment type="interaction">
    <interactant intactId="EBI-10192241">
        <id>O95833</id>
    </interactant>
    <interactant intactId="EBI-712648">
        <id>O95994</id>
        <label>AGR2</label>
    </interactant>
    <organismsDiffer>false</organismsDiffer>
    <experiments>3</experiments>
</comment>
<comment type="interaction">
    <interactant intactId="EBI-10192241">
        <id>O95833</id>
    </interactant>
    <interactant intactId="EBI-750671">
        <id>Q15699</id>
        <label>ALX1</label>
    </interactant>
    <organismsDiffer>false</organismsDiffer>
    <experiments>3</experiments>
</comment>
<comment type="interaction">
    <interactant intactId="EBI-10192241">
        <id>O95833</id>
    </interactant>
    <interactant intactId="EBI-5661893">
        <id>Q86SG2</id>
        <label>ANKRD23</label>
    </interactant>
    <organismsDiffer>false</organismsDiffer>
    <experiments>3</experiments>
</comment>
<comment type="interaction">
    <interactant intactId="EBI-10192241">
        <id>O95833</id>
    </interactant>
    <interactant intactId="EBI-14493093">
        <id>Q3KP44</id>
        <label>ANKRD55</label>
    </interactant>
    <organismsDiffer>false</organismsDiffer>
    <experiments>3</experiments>
</comment>
<comment type="interaction">
    <interactant intactId="EBI-10192241">
        <id>O95833</id>
    </interactant>
    <interactant intactId="EBI-12160437">
        <id>A8MTA8-2</id>
        <label>CIMIP2B</label>
    </interactant>
    <organismsDiffer>false</organismsDiffer>
    <experiments>3</experiments>
</comment>
<comment type="interaction">
    <interactant intactId="EBI-10192241">
        <id>O95833</id>
    </interactant>
    <interactant intactId="EBI-742054">
        <id>Q96D03</id>
        <label>DDIT4L</label>
    </interactant>
    <organismsDiffer>false</organismsDiffer>
    <experiments>3</experiments>
</comment>
<comment type="interaction">
    <interactant intactId="EBI-10192241">
        <id>O95833</id>
    </interactant>
    <interactant intactId="EBI-2349927">
        <id>Q5JST6</id>
        <label>EFHC2</label>
    </interactant>
    <organismsDiffer>false</organismsDiffer>
    <experiments>4</experiments>
</comment>
<comment type="interaction">
    <interactant intactId="EBI-10192241">
        <id>O95833</id>
    </interactant>
    <interactant intactId="EBI-12143817">
        <id>Q49A26-4</id>
        <label>GLYR1</label>
    </interactant>
    <organismsDiffer>false</organismsDiffer>
    <experiments>3</experiments>
</comment>
<comment type="interaction">
    <interactant intactId="EBI-10192241">
        <id>O95833</id>
    </interactant>
    <interactant intactId="EBI-6509505">
        <id>Q0VD86</id>
        <label>INCA1</label>
    </interactant>
    <organismsDiffer>false</organismsDiffer>
    <experiments>3</experiments>
</comment>
<comment type="interaction">
    <interactant intactId="EBI-10192241">
        <id>O95833</id>
    </interactant>
    <interactant intactId="EBI-715394">
        <id>Q9H079</id>
        <label>KATNBL1</label>
    </interactant>
    <organismsDiffer>false</organismsDiffer>
    <experiments>3</experiments>
</comment>
<comment type="interaction">
    <interactant intactId="EBI-10192241">
        <id>O95833</id>
    </interactant>
    <interactant intactId="EBI-1049371">
        <id>P78386</id>
        <label>KRT85</label>
    </interactant>
    <organismsDiffer>false</organismsDiffer>
    <experiments>3</experiments>
</comment>
<comment type="interaction">
    <interactant intactId="EBI-10192241">
        <id>O95833</id>
    </interactant>
    <interactant intactId="EBI-10241252">
        <id>Q3SY46</id>
        <label>KRTAP13-3</label>
    </interactant>
    <organismsDiffer>false</organismsDiffer>
    <experiments>5</experiments>
</comment>
<comment type="interaction">
    <interactant intactId="EBI-10192241">
        <id>O95833</id>
    </interactant>
    <interactant intactId="EBI-18115868">
        <id>Q5T871</id>
        <label>LELP1</label>
    </interactant>
    <organismsDiffer>false</organismsDiffer>
    <experiments>3</experiments>
</comment>
<comment type="interaction">
    <interactant intactId="EBI-10192241">
        <id>O95833</id>
    </interactant>
    <interactant intactId="EBI-12516603">
        <id>Q8WWY6</id>
        <label>MBD3L1</label>
    </interactant>
    <organismsDiffer>false</organismsDiffer>
    <experiments>3</experiments>
</comment>
<comment type="interaction">
    <interactant intactId="EBI-10192241">
        <id>O95833</id>
    </interactant>
    <interactant intactId="EBI-23820194">
        <id>Q03112-9</id>
        <label>MECOM</label>
    </interactant>
    <organismsDiffer>false</organismsDiffer>
    <experiments>3</experiments>
</comment>
<comment type="interaction">
    <interactant intactId="EBI-10192241">
        <id>O95833</id>
    </interactant>
    <interactant intactId="EBI-2291868">
        <id>Q5JRA6</id>
        <label>MIA3</label>
    </interactant>
    <organismsDiffer>false</organismsDiffer>
    <experiments>3</experiments>
</comment>
<comment type="interaction">
    <interactant intactId="EBI-10192241">
        <id>O95833</id>
    </interactant>
    <interactant intactId="EBI-6447480">
        <id>P35548</id>
        <label>MSX2</label>
    </interactant>
    <organismsDiffer>false</organismsDiffer>
    <experiments>3</experiments>
</comment>
<comment type="interaction">
    <interactant intactId="EBI-10192241">
        <id>O95833</id>
    </interactant>
    <interactant intactId="EBI-752420">
        <id>Q9NUX5</id>
        <label>POT1</label>
    </interactant>
    <organismsDiffer>false</organismsDiffer>
    <experiments>2</experiments>
</comment>
<comment type="interaction">
    <interactant intactId="EBI-10192241">
        <id>O95833</id>
    </interactant>
    <interactant intactId="EBI-13089670">
        <id>Q86WR7-2</id>
        <label>PROSER2</label>
    </interactant>
    <organismsDiffer>false</organismsDiffer>
    <experiments>5</experiments>
</comment>
<comment type="interaction">
    <interactant intactId="EBI-10192241">
        <id>O95833</id>
    </interactant>
    <interactant intactId="EBI-17182094">
        <id>Q8N228-3</id>
        <label>SCML4</label>
    </interactant>
    <organismsDiffer>false</organismsDiffer>
    <experiments>3</experiments>
</comment>
<comment type="interaction">
    <interactant intactId="EBI-10192241">
        <id>O95833</id>
    </interactant>
    <interactant intactId="EBI-10174456">
        <id>Q8N865</id>
        <label>SPMIP4</label>
    </interactant>
    <organismsDiffer>false</organismsDiffer>
    <experiments>3</experiments>
</comment>
<comment type="interaction">
    <interactant intactId="EBI-10192241">
        <id>O95833</id>
    </interactant>
    <interactant intactId="EBI-10269322">
        <id>Q8NCR6</id>
        <label>SPMIP6</label>
    </interactant>
    <organismsDiffer>false</organismsDiffer>
    <experiments>3</experiments>
</comment>
<comment type="interaction">
    <interactant intactId="EBI-10192241">
        <id>O95833</id>
    </interactant>
    <interactant intactId="EBI-725557">
        <id>Q9NZ72</id>
        <label>STMN3</label>
    </interactant>
    <organismsDiffer>false</organismsDiffer>
    <experiments>3</experiments>
</comment>
<comment type="interaction">
    <interactant intactId="EBI-10192241">
        <id>O95833</id>
    </interactant>
    <interactant intactId="EBI-18393978">
        <id>A6NER0</id>
        <label>TBC1D3F</label>
    </interactant>
    <organismsDiffer>false</organismsDiffer>
    <experiments>3</experiments>
</comment>
<comment type="interaction">
    <interactant intactId="EBI-10192241">
        <id>O95833</id>
    </interactant>
    <interactant intactId="EBI-11139477">
        <id>Q96N21</id>
        <label>TEPSIN</label>
    </interactant>
    <organismsDiffer>false</organismsDiffer>
    <experiments>3</experiments>
</comment>
<comment type="interaction">
    <interactant intactId="EBI-10192241">
        <id>O95833</id>
    </interactant>
    <interactant intactId="EBI-11741437">
        <id>Q08117-2</id>
        <label>TLE5</label>
    </interactant>
    <organismsDiffer>false</organismsDiffer>
    <experiments>3</experiments>
</comment>
<comment type="interaction">
    <interactant intactId="EBI-10192241">
        <id>O95833</id>
    </interactant>
    <interactant intactId="EBI-1171942">
        <id>Q9UN37</id>
        <label>VPS4A</label>
    </interactant>
    <organismsDiffer>false</organismsDiffer>
    <experiments>3</experiments>
</comment>
<comment type="interaction">
    <interactant intactId="EBI-10192241">
        <id>O95833</id>
    </interactant>
    <interactant intactId="EBI-12287587">
        <id>B2RXF5</id>
        <label>ZBTB42</label>
    </interactant>
    <organismsDiffer>false</organismsDiffer>
    <experiments>3</experiments>
</comment>
<comment type="interaction">
    <interactant intactId="EBI-10192241">
        <id>O95833</id>
    </interactant>
    <interactant intactId="EBI-14104088">
        <id>Q53FD0-2</id>
        <label>ZC2HC1C</label>
    </interactant>
    <organismsDiffer>false</organismsDiffer>
    <experiments>3</experiments>
</comment>
<comment type="interaction">
    <interactant intactId="EBI-10192241">
        <id>O95833</id>
    </interactant>
    <interactant intactId="EBI-4395669">
        <id>Q6ZNG0</id>
        <label>ZNF620</label>
    </interactant>
    <organismsDiffer>false</organismsDiffer>
    <experiments>3</experiments>
</comment>
<comment type="subcellular location">
    <subcellularLocation>
        <location>Nucleus</location>
    </subcellularLocation>
    <subcellularLocation>
        <location>Membrane</location>
        <topology>Single-pass membrane protein</topology>
    </subcellularLocation>
    <subcellularLocation>
        <location evidence="8">Cell membrane</location>
        <topology>Single-pass membrane protein</topology>
    </subcellularLocation>
    <subcellularLocation>
        <location>Cytoplasm</location>
    </subcellularLocation>
    <subcellularLocation>
        <location evidence="7">Secreted</location>
        <location evidence="7">Extracellular space</location>
        <location evidence="7">Extracellular matrix</location>
    </subcellularLocation>
    <text evidence="1 7">Predominantly nuclear. Some protein was found in the cytoplasm. Exists both as soluble cytoplasmic protein and as membrane protein with probably a single transmembrane domain (By similarity). Secreted into the extracellular matrix by activated fibroblasts.</text>
</comment>
<comment type="tissue specificity">
    <text evidence="5 10">Detected in placenta (at protein level). Widely expressed. High expression is found in placenta followed by lung and heart. Low expression in skeletal muscle, kidney and pancreas.</text>
</comment>
<comment type="domain">
    <text evidence="13 15">The active G-site contains a dithiol Cys-X-X-Cys motif which mediates glutathione-dependent redox catalysis.</text>
</comment>
<comment type="domain">
    <text evidence="1">Members of this family may change from a globular, soluble state to a state where the N-terminal domain is inserted into the membrane and functions as a chloride channel. The redox status of the active cysteine in Cys-X-X-Cys motif likely determines the capacity to adopt a soluble or membrane-inserted state. A conformation change of the N-terminal domain is thought to expose hydrophobic surfaces that trigger membrane insertion (By similarity).</text>
</comment>
<comment type="miscellaneous">
    <text evidence="7 8">Overexpression of CLIC3 is associated with cancer pathology; it positively correlates with pancreatic, ovarian and breast cancer prognosis and negatively with gastric cancer prognosis.</text>
</comment>
<comment type="similarity">
    <text evidence="12">Belongs to the chloride channel CLIC family.</text>
</comment>
<comment type="sequence caution" evidence="12">
    <conflict type="frameshift">
        <sequence resource="EMBL-CDS" id="AAD16450"/>
    </conflict>
</comment>
<feature type="chain" id="PRO_0000144207" description="Chloride intracellular channel protein 3">
    <location>
        <begin position="1"/>
        <end position="236"/>
    </location>
</feature>
<feature type="transmembrane region" description="Helical" evidence="2">
    <location>
        <begin position="24"/>
        <end position="44"/>
    </location>
</feature>
<feature type="domain" description="GST N-terminal" evidence="3">
    <location>
        <begin position="12"/>
        <end position="90"/>
    </location>
</feature>
<feature type="domain" description="GST C-terminal" evidence="4">
    <location>
        <begin position="68"/>
        <end position="235"/>
    </location>
</feature>
<feature type="region of interest" description="Required for insertion into the membrane" evidence="1">
    <location>
        <begin position="1"/>
        <end position="88"/>
    </location>
</feature>
<feature type="short sequence motif" description="G-site" evidence="13 15">
    <location>
        <begin position="22"/>
        <end position="25"/>
    </location>
</feature>
<feature type="modified residue" description="Phosphoserine" evidence="17">
    <location>
        <position position="49"/>
    </location>
</feature>
<feature type="modified residue" description="Phosphoserine" evidence="17">
    <location>
        <position position="159"/>
    </location>
</feature>
<feature type="disulfide bond" description="In soluble form" evidence="6">
    <location>
        <begin position="22"/>
        <end position="25"/>
    </location>
</feature>
<feature type="sequence variant" id="VAR_020424" description="In dbSNP:rs2292923.">
    <original>P</original>
    <variation>H</variation>
    <location>
        <position position="38"/>
    </location>
</feature>
<feature type="mutagenesis site" description="Decreases glutathione-dependent oxidoreductase activity toward TGM2." evidence="7">
    <original>C</original>
    <variation>A</variation>
    <location>
        <position position="22"/>
    </location>
</feature>
<feature type="strand" evidence="18">
    <location>
        <begin position="6"/>
        <end position="12"/>
    </location>
</feature>
<feature type="strand" evidence="18">
    <location>
        <begin position="16"/>
        <end position="19"/>
    </location>
</feature>
<feature type="helix" evidence="18">
    <location>
        <begin position="23"/>
        <end position="35"/>
    </location>
</feature>
<feature type="strand" evidence="18">
    <location>
        <begin position="40"/>
        <end position="44"/>
    </location>
</feature>
<feature type="strand" evidence="18">
    <location>
        <begin position="64"/>
        <end position="67"/>
    </location>
</feature>
<feature type="strand" evidence="18">
    <location>
        <begin position="70"/>
        <end position="72"/>
    </location>
</feature>
<feature type="helix" evidence="18">
    <location>
        <begin position="75"/>
        <end position="85"/>
    </location>
</feature>
<feature type="turn" evidence="18">
    <location>
        <begin position="88"/>
        <end position="90"/>
    </location>
</feature>
<feature type="helix" evidence="18">
    <location>
        <begin position="99"/>
        <end position="103"/>
    </location>
</feature>
<feature type="turn" evidence="18">
    <location>
        <begin position="104"/>
        <end position="107"/>
    </location>
</feature>
<feature type="helix" evidence="18">
    <location>
        <begin position="108"/>
        <end position="117"/>
    </location>
</feature>
<feature type="helix" evidence="18">
    <location>
        <begin position="121"/>
        <end position="123"/>
    </location>
</feature>
<feature type="helix" evidence="18">
    <location>
        <begin position="124"/>
        <end position="143"/>
    </location>
</feature>
<feature type="helix" evidence="18">
    <location>
        <begin position="147"/>
        <end position="152"/>
    </location>
</feature>
<feature type="strand" evidence="18">
    <location>
        <begin position="162"/>
        <end position="168"/>
    </location>
</feature>
<feature type="helix" evidence="18">
    <location>
        <begin position="171"/>
        <end position="191"/>
    </location>
</feature>
<feature type="helix" evidence="18">
    <location>
        <begin position="200"/>
        <end position="210"/>
    </location>
</feature>
<feature type="helix" evidence="18">
    <location>
        <begin position="213"/>
        <end position="216"/>
    </location>
</feature>
<feature type="helix" evidence="18">
    <location>
        <begin position="222"/>
        <end position="229"/>
    </location>
</feature>
<name>CLIC3_HUMAN</name>
<protein>
    <recommendedName>
        <fullName evidence="11">Chloride intracellular channel protein 3</fullName>
    </recommendedName>
    <alternativeName>
        <fullName evidence="15">Glutaredoxin-like oxidoreductase CLIC3</fullName>
        <ecNumber evidence="9">1.8.-.-</ecNumber>
    </alternativeName>
</protein>